<gene>
    <name type="primary">mdmB</name>
    <name type="synonym">mdm10</name>
    <name type="ORF">AFUA_5G13460</name>
</gene>
<organism>
    <name type="scientific">Aspergillus fumigatus (strain ATCC MYA-4609 / CBS 101355 / FGSC A1100 / Af293)</name>
    <name type="common">Neosartorya fumigata</name>
    <dbReference type="NCBI Taxonomy" id="330879"/>
    <lineage>
        <taxon>Eukaryota</taxon>
        <taxon>Fungi</taxon>
        <taxon>Dikarya</taxon>
        <taxon>Ascomycota</taxon>
        <taxon>Pezizomycotina</taxon>
        <taxon>Eurotiomycetes</taxon>
        <taxon>Eurotiomycetidae</taxon>
        <taxon>Eurotiales</taxon>
        <taxon>Aspergillaceae</taxon>
        <taxon>Aspergillus</taxon>
        <taxon>Aspergillus subgen. Fumigati</taxon>
    </lineage>
</organism>
<keyword id="KW-0472">Membrane</keyword>
<keyword id="KW-0496">Mitochondrion</keyword>
<keyword id="KW-1000">Mitochondrion outer membrane</keyword>
<keyword id="KW-1185">Reference proteome</keyword>
<keyword id="KW-0812">Transmembrane</keyword>
<keyword id="KW-1134">Transmembrane beta strand</keyword>
<evidence type="ECO:0000255" key="1">
    <source>
        <dbReference type="HAMAP-Rule" id="MF_03102"/>
    </source>
</evidence>
<evidence type="ECO:0000256" key="2">
    <source>
        <dbReference type="SAM" id="MobiDB-lite"/>
    </source>
</evidence>
<dbReference type="EMBL" id="AAHF01000003">
    <property type="protein sequence ID" value="EAL91270.1"/>
    <property type="molecule type" value="Genomic_DNA"/>
</dbReference>
<dbReference type="RefSeq" id="XP_753308.1">
    <property type="nucleotide sequence ID" value="XM_748215.1"/>
</dbReference>
<dbReference type="SMR" id="Q4WVV6"/>
<dbReference type="FunCoup" id="Q4WVV6">
    <property type="interactions" value="54"/>
</dbReference>
<dbReference type="STRING" id="330879.Q4WVV6"/>
<dbReference type="EnsemblFungi" id="EAL91270">
    <property type="protein sequence ID" value="EAL91270"/>
    <property type="gene ID" value="AFUA_5G13460"/>
</dbReference>
<dbReference type="GeneID" id="3511305"/>
<dbReference type="KEGG" id="afm:AFUA_5G13460"/>
<dbReference type="VEuPathDB" id="FungiDB:Afu5g13460"/>
<dbReference type="eggNOG" id="ENOG502QUN5">
    <property type="taxonomic scope" value="Eukaryota"/>
</dbReference>
<dbReference type="HOGENOM" id="CLU_026505_1_0_1"/>
<dbReference type="InParanoid" id="Q4WVV6"/>
<dbReference type="OMA" id="VPGYRQI"/>
<dbReference type="OrthoDB" id="2103793at2759"/>
<dbReference type="Proteomes" id="UP000002530">
    <property type="component" value="Chromosome 5"/>
</dbReference>
<dbReference type="GO" id="GO:0032865">
    <property type="term" value="C:ERMES complex"/>
    <property type="evidence" value="ECO:0000318"/>
    <property type="project" value="GO_Central"/>
</dbReference>
<dbReference type="GO" id="GO:0001401">
    <property type="term" value="C:SAM complex"/>
    <property type="evidence" value="ECO:0000318"/>
    <property type="project" value="GO_Central"/>
</dbReference>
<dbReference type="GO" id="GO:0051654">
    <property type="term" value="P:establishment of mitochondrion localization"/>
    <property type="evidence" value="ECO:0000318"/>
    <property type="project" value="GO_Central"/>
</dbReference>
<dbReference type="GO" id="GO:0000002">
    <property type="term" value="P:mitochondrial genome maintenance"/>
    <property type="evidence" value="ECO:0007669"/>
    <property type="project" value="UniProtKB-UniRule"/>
</dbReference>
<dbReference type="GO" id="GO:0070096">
    <property type="term" value="P:mitochondrial outer membrane translocase complex assembly"/>
    <property type="evidence" value="ECO:0000318"/>
    <property type="project" value="GO_Central"/>
</dbReference>
<dbReference type="GO" id="GO:1990456">
    <property type="term" value="P:mitochondrion-endoplasmic reticulum membrane tethering"/>
    <property type="evidence" value="ECO:0000318"/>
    <property type="project" value="GO_Central"/>
</dbReference>
<dbReference type="GO" id="GO:0015914">
    <property type="term" value="P:phospholipid transport"/>
    <property type="evidence" value="ECO:0000318"/>
    <property type="project" value="GO_Central"/>
</dbReference>
<dbReference type="GO" id="GO:0045040">
    <property type="term" value="P:protein insertion into mitochondrial outer membrane"/>
    <property type="evidence" value="ECO:0000318"/>
    <property type="project" value="GO_Central"/>
</dbReference>
<dbReference type="HAMAP" id="MF_03102">
    <property type="entry name" value="Mdm10"/>
    <property type="match status" value="1"/>
</dbReference>
<dbReference type="InterPro" id="IPR027539">
    <property type="entry name" value="Mdm10"/>
</dbReference>
<dbReference type="PANTHER" id="PTHR28035">
    <property type="entry name" value="MITOCHONDRIAL DISTRIBUTION AND MORPHOLOGY PROTEIN 10"/>
    <property type="match status" value="1"/>
</dbReference>
<dbReference type="PANTHER" id="PTHR28035:SF1">
    <property type="entry name" value="MITOCHONDRIAL DISTRIBUTION AND MORPHOLOGY PROTEIN 10"/>
    <property type="match status" value="1"/>
</dbReference>
<dbReference type="Pfam" id="PF12519">
    <property type="entry name" value="MDM10"/>
    <property type="match status" value="1"/>
</dbReference>
<accession>Q4WVV6</accession>
<proteinExistence type="inferred from homology"/>
<sequence length="471" mass="50707">MLDFMDYIQLAFAEATNWNCDNSYSSLTATAQSLLDFSTPERLRVHLSSLATPHFATSYTLGTVGLIDGSVSYLYSTVPLNNTPSRSALIPLRKLARGYRQVQPPVAPVEDCGWQSCLGGLGSSESKPSGNDDSQPSPGRKATLLNATLHLPPPTILNALFLRRMSPTMQLSLAVCSTRGAPLSNSAPQASLLGQLSHDTGKYSNEYLFSTDNSLFGWRGLWNFGPDPRHPKENSSPQLSLLSAGAEAYYSPVSSLIGMSTGLRFSTLPAATEMPSSSSSASSTTTTSNHDTPISTFPYTLTLVLTPLTGSLSTTYSLRASPNLAFSSRFGFNVYSWESEMVAGCELWRKRRKPSPPPVDDDGLEWARRKMRMADTPAFAPVEPPTTHNRDEENESVLKIRVDQSWNVRLLWEGRVKELLVSAGVGLGPSSFSSPSRAANSTPAGGGQSVGGGISGRSYWHGVGVSISYSS</sequence>
<feature type="chain" id="PRO_0000384163" description="Mitochondrial distribution and morphology protein 10">
    <location>
        <begin position="1"/>
        <end position="471"/>
    </location>
</feature>
<feature type="region of interest" description="Disordered" evidence="2">
    <location>
        <begin position="429"/>
        <end position="455"/>
    </location>
</feature>
<feature type="compositionally biased region" description="Gly residues" evidence="2">
    <location>
        <begin position="444"/>
        <end position="455"/>
    </location>
</feature>
<comment type="function">
    <text evidence="1">Component of the ERMES/MDM complex, which serves as a molecular tether to connect the endoplasmic reticulum and mitochondria. Components of this complex are involved in the control of mitochondrial shape and protein biogenesis and may function in phospholipid exchange. mdm10 is involved in the late assembly steps of the general translocase of the mitochondrial outer membrane (TOM complex). Functions in the tom40-specific route of the assembly of outer membrane beta-barrel proteins, including the association of tom40 with the receptor tom22 and small TOM proteins. Can associate with the SAM(core) complex as well as the mdm12-mmm1 complex, both involved in late steps of the major beta-barrel assembly pathway, that is responsible for biogenesis of all outer membrane beta-barrel proteins. May act as a switch that shuttles between both complexes and channels precursor proteins into the tom40-specific pathway. Plays a role in mitochondrial morphology and in the inheritance of mitochondria.</text>
</comment>
<comment type="subunit">
    <text evidence="1">Component of the ER-mitochondria encounter structure (ERMES) or MDM complex, composed of mmm1, mdm10, mdm12 and mdm34. Associates with the mitochondrial outer membrane sorting assembly machinery SAM(core) complex.</text>
</comment>
<comment type="subcellular location">
    <subcellularLocation>
        <location evidence="1">Mitochondrion outer membrane</location>
        <topology evidence="1">Multi-pass membrane protein</topology>
    </subcellularLocation>
    <text evidence="1">The ERMES/MDM complex localizes to a few discrete foci (around 10 per single cell), that represent mitochondria-endoplasmic reticulum junctions. These foci are often found next to mtDNA nucleoids.</text>
</comment>
<comment type="domain">
    <text>Lacks alpha-helical transmembrane segments, suggesting that it resides in the membrane via beta-sheet conformations similar to those predicted for other outer membrane proteins and porin.</text>
</comment>
<comment type="similarity">
    <text evidence="1">Belongs to the MDM10 family.</text>
</comment>
<reference key="1">
    <citation type="journal article" date="2005" name="Nature">
        <title>Genomic sequence of the pathogenic and allergenic filamentous fungus Aspergillus fumigatus.</title>
        <authorList>
            <person name="Nierman W.C."/>
            <person name="Pain A."/>
            <person name="Anderson M.J."/>
            <person name="Wortman J.R."/>
            <person name="Kim H.S."/>
            <person name="Arroyo J."/>
            <person name="Berriman M."/>
            <person name="Abe K."/>
            <person name="Archer D.B."/>
            <person name="Bermejo C."/>
            <person name="Bennett J.W."/>
            <person name="Bowyer P."/>
            <person name="Chen D."/>
            <person name="Collins M."/>
            <person name="Coulsen R."/>
            <person name="Davies R."/>
            <person name="Dyer P.S."/>
            <person name="Farman M.L."/>
            <person name="Fedorova N."/>
            <person name="Fedorova N.D."/>
            <person name="Feldblyum T.V."/>
            <person name="Fischer R."/>
            <person name="Fosker N."/>
            <person name="Fraser A."/>
            <person name="Garcia J.L."/>
            <person name="Garcia M.J."/>
            <person name="Goble A."/>
            <person name="Goldman G.H."/>
            <person name="Gomi K."/>
            <person name="Griffith-Jones S."/>
            <person name="Gwilliam R."/>
            <person name="Haas B.J."/>
            <person name="Haas H."/>
            <person name="Harris D.E."/>
            <person name="Horiuchi H."/>
            <person name="Huang J."/>
            <person name="Humphray S."/>
            <person name="Jimenez J."/>
            <person name="Keller N."/>
            <person name="Khouri H."/>
            <person name="Kitamoto K."/>
            <person name="Kobayashi T."/>
            <person name="Konzack S."/>
            <person name="Kulkarni R."/>
            <person name="Kumagai T."/>
            <person name="Lafton A."/>
            <person name="Latge J.-P."/>
            <person name="Li W."/>
            <person name="Lord A."/>
            <person name="Lu C."/>
            <person name="Majoros W.H."/>
            <person name="May G.S."/>
            <person name="Miller B.L."/>
            <person name="Mohamoud Y."/>
            <person name="Molina M."/>
            <person name="Monod M."/>
            <person name="Mouyna I."/>
            <person name="Mulligan S."/>
            <person name="Murphy L.D."/>
            <person name="O'Neil S."/>
            <person name="Paulsen I."/>
            <person name="Penalva M.A."/>
            <person name="Pertea M."/>
            <person name="Price C."/>
            <person name="Pritchard B.L."/>
            <person name="Quail M.A."/>
            <person name="Rabbinowitsch E."/>
            <person name="Rawlins N."/>
            <person name="Rajandream M.A."/>
            <person name="Reichard U."/>
            <person name="Renauld H."/>
            <person name="Robson G.D."/>
            <person name="Rodriguez de Cordoba S."/>
            <person name="Rodriguez-Pena J.M."/>
            <person name="Ronning C.M."/>
            <person name="Rutter S."/>
            <person name="Salzberg S.L."/>
            <person name="Sanchez M."/>
            <person name="Sanchez-Ferrero J.C."/>
            <person name="Saunders D."/>
            <person name="Seeger K."/>
            <person name="Squares R."/>
            <person name="Squares S."/>
            <person name="Takeuchi M."/>
            <person name="Tekaia F."/>
            <person name="Turner G."/>
            <person name="Vazquez de Aldana C.R."/>
            <person name="Weidman J."/>
            <person name="White O."/>
            <person name="Woodward J.R."/>
            <person name="Yu J.-H."/>
            <person name="Fraser C.M."/>
            <person name="Galagan J.E."/>
            <person name="Asai K."/>
            <person name="Machida M."/>
            <person name="Hall N."/>
            <person name="Barrell B.G."/>
            <person name="Denning D.W."/>
        </authorList>
    </citation>
    <scope>NUCLEOTIDE SEQUENCE [LARGE SCALE GENOMIC DNA]</scope>
    <source>
        <strain>ATCC MYA-4609 / CBS 101355 / FGSC A1100 / Af293</strain>
    </source>
</reference>
<name>MDM10_ASPFU</name>
<protein>
    <recommendedName>
        <fullName evidence="1">Mitochondrial distribution and morphology protein 10</fullName>
    </recommendedName>
    <alternativeName>
        <fullName evidence="1">Mitochondrial inheritance component mdm10</fullName>
    </alternativeName>
</protein>